<accession>P13847</accession>
<accession>Q67853</accession>
<comment type="function">
    <text evidence="1">The large envelope protein exists in two topological conformations, one which is termed 'external' or Le-HBsAg and the other 'internal' or Li-HBsAg. In its external conformation the protein attaches the virus to cell receptors and thereby initiating infection. This interaction determines the species specificity and liver tropism. The large envelope protein probably also assumes fusion between virion and host membranes. In its internal conformation the protein plays a role in virion morphogenesis and mediates the contact with the nucleocapsid like a matrix protein (By similarity).</text>
</comment>
<comment type="function">
    <text evidence="1">Truncated S protein may be involved in translocation of pre-S domain through the virion membrane.</text>
</comment>
<comment type="subunit">
    <text evidence="1">Large internal envelope protein interacts with capsid protein.</text>
</comment>
<comment type="subcellular location">
    <subcellularLocation>
        <location>Virion membrane</location>
    </subcellularLocation>
</comment>
<comment type="alternative products">
    <event type="alternative initiation"/>
    <isoform>
        <id>P13847-1</id>
        <name>L</name>
        <name>Large envelope protein</name>
        <name>LHB</name>
        <name>L-HBsAg</name>
        <sequence type="displayed"/>
    </isoform>
    <isoform>
        <id>P13847-2</id>
        <name>S</name>
        <name>Small envelope protein</name>
        <name>SHB</name>
        <name>S-HBsAg</name>
        <sequence type="described" ref="VSP_031891"/>
    </isoform>
</comment>
<comment type="domain">
    <text>The large envelope protein is synthesized with the pre-S region at the cytosolic side of the endoplasmic reticulum and, hence will be within the virion after budding. Therefore the pre-S region is not N-glycosylated. Later a post-translational translocation of N-terminal pre-S and TM1 domains occur in about 50% of proteins at the virion surface. These molecules change their topology by an unknown mechanism, resulting in exposure of pre-S region at virion surface.</text>
</comment>
<comment type="PTM">
    <text>Myristoylation contributes importantly to DHBV infectivity. It is most likely required for an early step of the life cycle involving the entry or uncoating of virus particles.</text>
</comment>
<comment type="PTM">
    <text>Phosphorylated on pre-S domain for about 50% of L proteins, the L chains with internal pre-S region (Li-HBsAg).</text>
</comment>
<comment type="similarity">
    <text evidence="4">Belongs to the avihepadnavirus major surface antigen family.</text>
</comment>
<comment type="sequence caution" evidence="4">
    <conflict type="erroneous initiation">
        <sequence resource="EMBL-CDS" id="AAA45740"/>
    </conflict>
</comment>
<proteinExistence type="inferred from homology"/>
<feature type="initiator methionine" description="Removed; by host" evidence="1">
    <location>
        <position position="1"/>
    </location>
</feature>
<feature type="chain" id="PRO_0000038085" description="Large envelope protein">
    <location>
        <begin position="2"/>
        <end position="335"/>
    </location>
</feature>
<feature type="chain" id="PRO_0000322200" description="Truncated S protein">
    <location>
        <begin position="167"/>
        <end position="243" status="uncertain"/>
    </location>
</feature>
<feature type="topological domain" description="Cytoplasmic; in internal conformation" evidence="2">
    <location>
        <begin position="2"/>
        <end position="241"/>
    </location>
</feature>
<feature type="topological domain" description="Extracellular; in external conformation" evidence="2">
    <location>
        <begin position="2"/>
        <end position="167"/>
    </location>
</feature>
<feature type="transmembrane region" description="Helical; Name=TM1; Note=In internal conformation" evidence="2">
    <location>
        <begin position="168"/>
        <end position="188"/>
    </location>
</feature>
<feature type="topological domain" description="Cytoplasmic; in external conformation" evidence="2">
    <location>
        <begin position="189"/>
        <end position="241"/>
    </location>
</feature>
<feature type="transmembrane region" description="Helical; Name=TM2" evidence="2">
    <location>
        <begin position="242"/>
        <end position="262"/>
    </location>
</feature>
<feature type="topological domain" description="Extracellular" evidence="2">
    <location>
        <begin position="263"/>
        <end position="295"/>
    </location>
</feature>
<feature type="transmembrane region" description="Helical; Name=TM3" evidence="2">
    <location>
        <begin position="296"/>
        <end position="316"/>
    </location>
</feature>
<feature type="topological domain" description="Cytoplasmic" evidence="2">
    <location>
        <begin position="317"/>
        <end position="335"/>
    </location>
</feature>
<feature type="region of interest" description="Pre-S" evidence="1">
    <location>
        <begin position="2"/>
        <end position="166"/>
    </location>
</feature>
<feature type="region of interest" description="Disordered" evidence="3">
    <location>
        <begin position="68"/>
        <end position="90"/>
    </location>
</feature>
<feature type="site" description="Cleavage; by host" evidence="2">
    <location>
        <begin position="243" status="uncertain"/>
        <end position="244" status="uncertain"/>
    </location>
</feature>
<feature type="lipid moiety-binding region" description="N-myristoyl glycine; by host" evidence="1">
    <location>
        <position position="2"/>
    </location>
</feature>
<feature type="glycosylation site" description="N-linked (GlcNAc...) asparagine; by host" evidence="2">
    <location>
        <position position="265"/>
    </location>
</feature>
<feature type="splice variant" id="VSP_031891" description="In isoform S." evidence="4">
    <location>
        <begin position="1"/>
        <end position="166"/>
    </location>
</feature>
<keyword id="KW-0024">Alternative initiation</keyword>
<keyword id="KW-1168">Fusion of virus membrane with host membrane</keyword>
<keyword id="KW-0325">Glycoprotein</keyword>
<keyword id="KW-0945">Host-virus interaction</keyword>
<keyword id="KW-0449">Lipoprotein</keyword>
<keyword id="KW-0472">Membrane</keyword>
<keyword id="KW-0519">Myristate</keyword>
<keyword id="KW-0597">Phosphoprotein</keyword>
<keyword id="KW-0812">Transmembrane</keyword>
<keyword id="KW-1133">Transmembrane helix</keyword>
<keyword id="KW-1161">Viral attachment to host cell</keyword>
<keyword id="KW-0261">Viral envelope protein</keyword>
<keyword id="KW-1162">Viral penetration into host cytoplasm</keyword>
<keyword id="KW-0946">Virion</keyword>
<keyword id="KW-1160">Virus entry into host cell</keyword>
<gene>
    <name type="primary">S</name>
</gene>
<organismHost>
    <name type="scientific">Ardeidae</name>
    <name type="common">herons</name>
    <dbReference type="NCBI Taxonomy" id="8899"/>
</organismHost>
<sequence>MGHTQAKSTTDRRVEGGELLLQHLAGRMIPPEFSGPITTAGKFPTIQHVMDHIDSVEELRTLQAGGHWPEGTARRLGLDQPRPTPPPITWTEEEDKKAKEFFKQYQENRPKPAETAPPPITELHAAEPPQWKISPEDPLLKAKALIPVKEPEVPILKVPKLTNKKKMGATFGGILAGLIGLLVGFFLLTKILEILRKLDWWWISLSSPKEKMLCAFQNTGAQTSPHYVGSCPWGCPGFLWTYLRLFIIFLLLLLVAAGLLFLTENKSTIFEKLQWESVSALSSSIYSLLPSEPKSLVALTFGLFLIWTTSSSVTQVLVTLTQLATLSALFFKNSG</sequence>
<name>HBSAG_HHBV</name>
<organism>
    <name type="scientific">Heron hepatitis B virus</name>
    <name type="common">HHBV</name>
    <dbReference type="NCBI Taxonomy" id="28300"/>
    <lineage>
        <taxon>Viruses</taxon>
        <taxon>Riboviria</taxon>
        <taxon>Pararnavirae</taxon>
        <taxon>Artverviricota</taxon>
        <taxon>Revtraviricetes</taxon>
        <taxon>Blubervirales</taxon>
        <taxon>Hepadnaviridae</taxon>
        <taxon>Avihepadnavirus</taxon>
    </lineage>
</organism>
<reference key="1">
    <citation type="journal article" date="1988" name="J. Virol.">
        <title>Isolation and characterization of a hepatitis B virus endemic in herons.</title>
        <authorList>
            <person name="Sprengel R."/>
            <person name="Kaleta E.F."/>
            <person name="Will H."/>
        </authorList>
    </citation>
    <scope>NUCLEOTIDE SEQUENCE [GENOMIC DNA]</scope>
</reference>
<evidence type="ECO:0000250" key="1"/>
<evidence type="ECO:0000255" key="2"/>
<evidence type="ECO:0000256" key="3">
    <source>
        <dbReference type="SAM" id="MobiDB-lite"/>
    </source>
</evidence>
<evidence type="ECO:0000305" key="4"/>
<dbReference type="EMBL" id="M22056">
    <property type="protein sequence ID" value="AAA45739.1"/>
    <property type="molecule type" value="Genomic_DNA"/>
</dbReference>
<dbReference type="EMBL" id="M22056">
    <property type="protein sequence ID" value="AAA45740.1"/>
    <property type="status" value="ALT_INIT"/>
    <property type="molecule type" value="Genomic_DNA"/>
</dbReference>
<dbReference type="PIR" id="B30082">
    <property type="entry name" value="SAVLHH"/>
</dbReference>
<dbReference type="RefSeq" id="NP_040999.1">
    <molecule id="P13847-1"/>
    <property type="nucleotide sequence ID" value="NC_001486.1"/>
</dbReference>
<dbReference type="RefSeq" id="NP_041000.1">
    <molecule id="P13847-2"/>
    <property type="nucleotide sequence ID" value="NC_001486.1"/>
</dbReference>
<dbReference type="GlyCosmos" id="P13847">
    <property type="glycosylation" value="1 site, No reported glycans"/>
</dbReference>
<dbReference type="KEGG" id="vg:2703548"/>
<dbReference type="OrthoDB" id="8887at10239"/>
<dbReference type="Proteomes" id="UP000008679">
    <property type="component" value="Genome"/>
</dbReference>
<dbReference type="GO" id="GO:0016020">
    <property type="term" value="C:membrane"/>
    <property type="evidence" value="ECO:0007669"/>
    <property type="project" value="UniProtKB-KW"/>
</dbReference>
<dbReference type="GO" id="GO:0019031">
    <property type="term" value="C:viral envelope"/>
    <property type="evidence" value="ECO:0007669"/>
    <property type="project" value="UniProtKB-KW"/>
</dbReference>
<dbReference type="GO" id="GO:0055036">
    <property type="term" value="C:virion membrane"/>
    <property type="evidence" value="ECO:0007669"/>
    <property type="project" value="UniProtKB-SubCell"/>
</dbReference>
<dbReference type="GO" id="GO:0039663">
    <property type="term" value="P:membrane fusion involved in viral entry into host cell"/>
    <property type="evidence" value="ECO:0007669"/>
    <property type="project" value="UniProtKB-KW"/>
</dbReference>
<dbReference type="GO" id="GO:0046718">
    <property type="term" value="P:symbiont entry into host cell"/>
    <property type="evidence" value="ECO:0007669"/>
    <property type="project" value="UniProtKB-KW"/>
</dbReference>
<dbReference type="GO" id="GO:0019062">
    <property type="term" value="P:virion attachment to host cell"/>
    <property type="evidence" value="ECO:0007669"/>
    <property type="project" value="UniProtKB-KW"/>
</dbReference>
<dbReference type="InterPro" id="IPR000349">
    <property type="entry name" value="HBV_HBSAG"/>
</dbReference>
<dbReference type="Pfam" id="PF00695">
    <property type="entry name" value="vMSA"/>
    <property type="match status" value="3"/>
</dbReference>
<protein>
    <recommendedName>
        <fullName>Large envelope protein</fullName>
    </recommendedName>
    <alternativeName>
        <fullName>L glycoprotein</fullName>
    </alternativeName>
    <alternativeName>
        <fullName>L-HBsAg</fullName>
        <shortName>LHB</shortName>
    </alternativeName>
    <alternativeName>
        <fullName>Large S protein</fullName>
    </alternativeName>
    <alternativeName>
        <fullName>Large surface protein</fullName>
    </alternativeName>
    <alternativeName>
        <fullName>Major surface antigen</fullName>
    </alternativeName>
    <component>
        <recommendedName>
            <fullName>Truncated S protein</fullName>
            <shortName>St</shortName>
        </recommendedName>
    </component>
</protein>